<reference key="1">
    <citation type="journal article" date="2007" name="Proc. Natl. Acad. Sci. U.S.A.">
        <title>Genomic and metabolic adaptations of Methanobrevibacter smithii to the human gut.</title>
        <authorList>
            <person name="Samuel B.S."/>
            <person name="Hansen E.E."/>
            <person name="Manchester J.K."/>
            <person name="Coutinho P.M."/>
            <person name="Henrissat B."/>
            <person name="Fulton R."/>
            <person name="Latreille P."/>
            <person name="Kim K."/>
            <person name="Wilson R.K."/>
            <person name="Gordon J.I."/>
        </authorList>
    </citation>
    <scope>NUCLEOTIDE SEQUENCE [LARGE SCALE GENOMIC DNA]</scope>
    <source>
        <strain>ATCC 35061 / DSM 861 / OCM 144 / PS</strain>
    </source>
</reference>
<dbReference type="EMBL" id="CP000678">
    <property type="protein sequence ID" value="ABQ86950.1"/>
    <property type="molecule type" value="Genomic_DNA"/>
</dbReference>
<dbReference type="RefSeq" id="WP_004033227.1">
    <property type="nucleotide sequence ID" value="NZ_CP117965.1"/>
</dbReference>
<dbReference type="SMR" id="A5UL72"/>
<dbReference type="STRING" id="420247.Msm_0745"/>
<dbReference type="EnsemblBacteria" id="ABQ86950">
    <property type="protein sequence ID" value="ABQ86950"/>
    <property type="gene ID" value="Msm_0745"/>
</dbReference>
<dbReference type="KEGG" id="msi:Msm_0745"/>
<dbReference type="PATRIC" id="fig|420247.28.peg.742"/>
<dbReference type="eggNOG" id="arCOG04090">
    <property type="taxonomic scope" value="Archaea"/>
</dbReference>
<dbReference type="HOGENOM" id="CLU_065464_0_0_2"/>
<dbReference type="Proteomes" id="UP000001992">
    <property type="component" value="Chromosome"/>
</dbReference>
<dbReference type="GO" id="GO:0022625">
    <property type="term" value="C:cytosolic large ribosomal subunit"/>
    <property type="evidence" value="ECO:0007669"/>
    <property type="project" value="TreeGrafter"/>
</dbReference>
<dbReference type="GO" id="GO:0019843">
    <property type="term" value="F:rRNA binding"/>
    <property type="evidence" value="ECO:0007669"/>
    <property type="project" value="UniProtKB-UniRule"/>
</dbReference>
<dbReference type="GO" id="GO:0003735">
    <property type="term" value="F:structural constituent of ribosome"/>
    <property type="evidence" value="ECO:0007669"/>
    <property type="project" value="InterPro"/>
</dbReference>
<dbReference type="GO" id="GO:0002181">
    <property type="term" value="P:cytoplasmic translation"/>
    <property type="evidence" value="ECO:0007669"/>
    <property type="project" value="TreeGrafter"/>
</dbReference>
<dbReference type="FunFam" id="3.90.930.12:FF:000008">
    <property type="entry name" value="50S ribosomal protein L6"/>
    <property type="match status" value="1"/>
</dbReference>
<dbReference type="FunFam" id="3.90.930.12:FF:000004">
    <property type="entry name" value="60S ribosomal protein L9"/>
    <property type="match status" value="1"/>
</dbReference>
<dbReference type="Gene3D" id="3.90.930.12">
    <property type="entry name" value="Ribosomal protein L6, alpha-beta domain"/>
    <property type="match status" value="2"/>
</dbReference>
<dbReference type="HAMAP" id="MF_01365_A">
    <property type="entry name" value="Ribosomal_uL6_A"/>
    <property type="match status" value="1"/>
</dbReference>
<dbReference type="InterPro" id="IPR000702">
    <property type="entry name" value="Ribosomal_uL6-like"/>
</dbReference>
<dbReference type="InterPro" id="IPR036789">
    <property type="entry name" value="Ribosomal_uL6-like_a/b-dom_sf"/>
</dbReference>
<dbReference type="InterPro" id="IPR020040">
    <property type="entry name" value="Ribosomal_uL6_a/b-dom"/>
</dbReference>
<dbReference type="InterPro" id="IPR019907">
    <property type="entry name" value="Ribosomal_uL6_arc"/>
</dbReference>
<dbReference type="InterPro" id="IPR002359">
    <property type="entry name" value="Ribosomal_uL6_CS2"/>
</dbReference>
<dbReference type="NCBIfam" id="NF004037">
    <property type="entry name" value="PRK05518.1"/>
    <property type="match status" value="1"/>
</dbReference>
<dbReference type="NCBIfam" id="TIGR03653">
    <property type="entry name" value="uL6_arch"/>
    <property type="match status" value="1"/>
</dbReference>
<dbReference type="PANTHER" id="PTHR11655:SF16">
    <property type="entry name" value="60S RIBOSOMAL PROTEIN L9"/>
    <property type="match status" value="1"/>
</dbReference>
<dbReference type="PANTHER" id="PTHR11655">
    <property type="entry name" value="60S/50S RIBOSOMAL PROTEIN L6/L9"/>
    <property type="match status" value="1"/>
</dbReference>
<dbReference type="Pfam" id="PF00347">
    <property type="entry name" value="Ribosomal_L6"/>
    <property type="match status" value="2"/>
</dbReference>
<dbReference type="PIRSF" id="PIRSF002162">
    <property type="entry name" value="Ribosomal_L6"/>
    <property type="match status" value="1"/>
</dbReference>
<dbReference type="SUPFAM" id="SSF56053">
    <property type="entry name" value="Ribosomal protein L6"/>
    <property type="match status" value="2"/>
</dbReference>
<dbReference type="PROSITE" id="PS00700">
    <property type="entry name" value="RIBOSOMAL_L6_2"/>
    <property type="match status" value="1"/>
</dbReference>
<protein>
    <recommendedName>
        <fullName evidence="1">Large ribosomal subunit protein uL6</fullName>
    </recommendedName>
    <alternativeName>
        <fullName evidence="2">50S ribosomal protein L6</fullName>
    </alternativeName>
</protein>
<keyword id="KW-0687">Ribonucleoprotein</keyword>
<keyword id="KW-0689">Ribosomal protein</keyword>
<keyword id="KW-0694">RNA-binding</keyword>
<keyword id="KW-0699">rRNA-binding</keyword>
<feature type="chain" id="PRO_1000055261" description="Large ribosomal subunit protein uL6">
    <location>
        <begin position="1"/>
        <end position="178"/>
    </location>
</feature>
<proteinExistence type="inferred from homology"/>
<accession>A5UL72</accession>
<evidence type="ECO:0000255" key="1">
    <source>
        <dbReference type="HAMAP-Rule" id="MF_01365"/>
    </source>
</evidence>
<evidence type="ECO:0000305" key="2"/>
<gene>
    <name evidence="1" type="primary">rpl6</name>
    <name type="ordered locus">Msm_0745</name>
</gene>
<organism>
    <name type="scientific">Methanobrevibacter smithii (strain ATCC 35061 / DSM 861 / OCM 144 / PS)</name>
    <dbReference type="NCBI Taxonomy" id="420247"/>
    <lineage>
        <taxon>Archaea</taxon>
        <taxon>Methanobacteriati</taxon>
        <taxon>Methanobacteriota</taxon>
        <taxon>Methanomada group</taxon>
        <taxon>Methanobacteria</taxon>
        <taxon>Methanobacteriales</taxon>
        <taxon>Methanobacteriaceae</taxon>
        <taxon>Methanobrevibacter</taxon>
    </lineage>
</organism>
<sequence>MVVAAAIREEIEIPEGVEVIINNNEVTVKGPNGEDSRKFTYPNVDITEVENNVVLETSFPRKKDKAMIGTTKAHISNMITGVTDGFEYHMKIVFAHFPMTVKVNKDVVVIDNFLGERHPRTAKVVGSAKVVVKGDEVTITGINKEHVGQTMANLEQATKIKGRDPRVFQDGIYLISKE</sequence>
<comment type="function">
    <text evidence="1">This protein binds to the 23S rRNA, and is important in its secondary structure. It is located near the subunit interface in the base of the L7/L12 stalk, and near the tRNA binding site of the peptidyltransferase center.</text>
</comment>
<comment type="subunit">
    <text evidence="1">Part of the 50S ribosomal subunit.</text>
</comment>
<comment type="similarity">
    <text evidence="1">Belongs to the universal ribosomal protein uL6 family.</text>
</comment>
<name>RL6_METS3</name>